<accession>Q46185</accession>
<organism>
    <name type="scientific">Clostridium perfringens (strain 13 / Type A)</name>
    <dbReference type="NCBI Taxonomy" id="195102"/>
    <lineage>
        <taxon>Bacteria</taxon>
        <taxon>Bacillati</taxon>
        <taxon>Bacillota</taxon>
        <taxon>Clostridia</taxon>
        <taxon>Eubacteriales</taxon>
        <taxon>Clostridiaceae</taxon>
        <taxon>Clostridium</taxon>
    </lineage>
</organism>
<feature type="chain" id="PRO_0000149835" description="Diaminopimelate epimerase">
    <location>
        <begin position="1"/>
        <end position="272"/>
    </location>
</feature>
<feature type="active site" description="Proton donor" evidence="1">
    <location>
        <position position="72"/>
    </location>
</feature>
<feature type="active site" description="Proton acceptor" evidence="1">
    <location>
        <position position="217"/>
    </location>
</feature>
<feature type="binding site" evidence="1">
    <location>
        <position position="11"/>
    </location>
    <ligand>
        <name>substrate</name>
    </ligand>
</feature>
<feature type="binding site" evidence="1">
    <location>
        <position position="63"/>
    </location>
    <ligand>
        <name>substrate</name>
    </ligand>
</feature>
<feature type="binding site" evidence="1">
    <location>
        <begin position="73"/>
        <end position="74"/>
    </location>
    <ligand>
        <name>substrate</name>
    </ligand>
</feature>
<feature type="binding site" evidence="1">
    <location>
        <position position="190"/>
    </location>
    <ligand>
        <name>substrate</name>
    </ligand>
</feature>
<feature type="binding site" evidence="1">
    <location>
        <begin position="208"/>
        <end position="209"/>
    </location>
    <ligand>
        <name>substrate</name>
    </ligand>
</feature>
<feature type="binding site" evidence="1">
    <location>
        <begin position="218"/>
        <end position="219"/>
    </location>
    <ligand>
        <name>substrate</name>
    </ligand>
</feature>
<feature type="site" description="Could be important to modulate the pK values of the two catalytic cysteine residues" evidence="1">
    <location>
        <position position="162"/>
    </location>
</feature>
<feature type="site" description="Could be important to modulate the pK values of the two catalytic cysteine residues" evidence="1">
    <location>
        <position position="208"/>
    </location>
</feature>
<feature type="sequence conflict" description="In Ref. 2; CAA60229." evidence="2" ref="2">
    <original>E</original>
    <variation>D</variation>
    <location>
        <position position="183"/>
    </location>
</feature>
<feature type="sequence conflict" description="In Ref. 2; CAA60229." evidence="2" ref="2">
    <original>F</original>
    <variation>S</variation>
    <location>
        <position position="193"/>
    </location>
</feature>
<feature type="sequence conflict" description="In Ref. 2; CAA60229." evidence="2" ref="2">
    <original>T</original>
    <variation>P</variation>
    <location>
        <position position="201"/>
    </location>
</feature>
<feature type="sequence conflict" description="In Ref. 2; CAA60229." evidence="2" ref="2">
    <original>T</original>
    <variation>P</variation>
    <location>
        <position position="206"/>
    </location>
</feature>
<feature type="sequence conflict" description="In Ref. 2; CAA60229." evidence="2" ref="2">
    <original>K</original>
    <variation>N</variation>
    <location>
        <position position="230"/>
    </location>
</feature>
<name>DAPF_CLOPE</name>
<reference key="1">
    <citation type="journal article" date="2002" name="Proc. Natl. Acad. Sci. U.S.A.">
        <title>Complete genome sequence of Clostridium perfringens, an anaerobic flesh-eater.</title>
        <authorList>
            <person name="Shimizu T."/>
            <person name="Ohtani K."/>
            <person name="Hirakawa H."/>
            <person name="Ohshima K."/>
            <person name="Yamashita A."/>
            <person name="Shiba T."/>
            <person name="Ogasawara N."/>
            <person name="Hattori M."/>
            <person name="Kuhara S."/>
            <person name="Hayashi H."/>
        </authorList>
    </citation>
    <scope>NUCLEOTIDE SEQUENCE [LARGE SCALE GENOMIC DNA]</scope>
    <source>
        <strain>13 / Type A</strain>
    </source>
</reference>
<reference key="2">
    <citation type="journal article" date="1995" name="J. Bacteriol.">
        <title>Rapid expansion of the physical and genetic map of the chromosome of Clostridium perfringens CPN50.</title>
        <authorList>
            <person name="Katayama S."/>
            <person name="Dupuy B."/>
            <person name="Garnier T."/>
            <person name="Cole S.T."/>
        </authorList>
    </citation>
    <scope>NUCLEOTIDE SEQUENCE [GENOMIC DNA] OF 168-238</scope>
    <source>
        <strain>CPN50</strain>
    </source>
</reference>
<dbReference type="EC" id="5.1.1.7" evidence="1"/>
<dbReference type="EMBL" id="BA000016">
    <property type="protein sequence ID" value="BAB81552.1"/>
    <property type="molecule type" value="Genomic_DNA"/>
</dbReference>
<dbReference type="EMBL" id="X86511">
    <property type="protein sequence ID" value="CAA60229.1"/>
    <property type="status" value="ALT_FRAME"/>
    <property type="molecule type" value="Genomic_DNA"/>
</dbReference>
<dbReference type="RefSeq" id="WP_011010638.1">
    <property type="nucleotide sequence ID" value="NC_003366.1"/>
</dbReference>
<dbReference type="SMR" id="Q46185"/>
<dbReference type="STRING" id="195102.gene:10491110"/>
<dbReference type="KEGG" id="cpe:CPE1846"/>
<dbReference type="HOGENOM" id="CLU_053306_3_0_9"/>
<dbReference type="UniPathway" id="UPA00034">
    <property type="reaction ID" value="UER00025"/>
</dbReference>
<dbReference type="Proteomes" id="UP000000818">
    <property type="component" value="Chromosome"/>
</dbReference>
<dbReference type="GO" id="GO:0005829">
    <property type="term" value="C:cytosol"/>
    <property type="evidence" value="ECO:0007669"/>
    <property type="project" value="TreeGrafter"/>
</dbReference>
<dbReference type="GO" id="GO:0008837">
    <property type="term" value="F:diaminopimelate epimerase activity"/>
    <property type="evidence" value="ECO:0007669"/>
    <property type="project" value="UniProtKB-UniRule"/>
</dbReference>
<dbReference type="GO" id="GO:0009089">
    <property type="term" value="P:lysine biosynthetic process via diaminopimelate"/>
    <property type="evidence" value="ECO:0007669"/>
    <property type="project" value="UniProtKB-UniRule"/>
</dbReference>
<dbReference type="FunFam" id="3.10.310.10:FF:000001">
    <property type="entry name" value="Diaminopimelate epimerase"/>
    <property type="match status" value="1"/>
</dbReference>
<dbReference type="Gene3D" id="3.10.310.10">
    <property type="entry name" value="Diaminopimelate Epimerase, Chain A, domain 1"/>
    <property type="match status" value="2"/>
</dbReference>
<dbReference type="HAMAP" id="MF_00197">
    <property type="entry name" value="DAP_epimerase"/>
    <property type="match status" value="1"/>
</dbReference>
<dbReference type="InterPro" id="IPR018510">
    <property type="entry name" value="DAP_epimerase_AS"/>
</dbReference>
<dbReference type="InterPro" id="IPR001653">
    <property type="entry name" value="DAP_epimerase_DapF"/>
</dbReference>
<dbReference type="NCBIfam" id="TIGR00652">
    <property type="entry name" value="DapF"/>
    <property type="match status" value="1"/>
</dbReference>
<dbReference type="PANTHER" id="PTHR31689:SF0">
    <property type="entry name" value="DIAMINOPIMELATE EPIMERASE"/>
    <property type="match status" value="1"/>
</dbReference>
<dbReference type="PANTHER" id="PTHR31689">
    <property type="entry name" value="DIAMINOPIMELATE EPIMERASE, CHLOROPLASTIC"/>
    <property type="match status" value="1"/>
</dbReference>
<dbReference type="Pfam" id="PF01678">
    <property type="entry name" value="DAP_epimerase"/>
    <property type="match status" value="2"/>
</dbReference>
<dbReference type="SUPFAM" id="SSF54506">
    <property type="entry name" value="Diaminopimelate epimerase-like"/>
    <property type="match status" value="2"/>
</dbReference>
<dbReference type="PROSITE" id="PS01326">
    <property type="entry name" value="DAP_EPIMERASE"/>
    <property type="match status" value="1"/>
</dbReference>
<protein>
    <recommendedName>
        <fullName evidence="1">Diaminopimelate epimerase</fullName>
        <shortName evidence="1">DAP epimerase</shortName>
        <ecNumber evidence="1">5.1.1.7</ecNumber>
    </recommendedName>
    <alternativeName>
        <fullName evidence="1">PLP-independent amino acid racemase</fullName>
    </alternativeName>
</protein>
<proteinExistence type="inferred from homology"/>
<evidence type="ECO:0000255" key="1">
    <source>
        <dbReference type="HAMAP-Rule" id="MF_00197"/>
    </source>
</evidence>
<evidence type="ECO:0000305" key="2"/>
<keyword id="KW-0028">Amino-acid biosynthesis</keyword>
<keyword id="KW-0963">Cytoplasm</keyword>
<keyword id="KW-0413">Isomerase</keyword>
<keyword id="KW-0457">Lysine biosynthesis</keyword>
<keyword id="KW-1185">Reference proteome</keyword>
<comment type="function">
    <text evidence="1">Catalyzes the stereoinversion of LL-2,6-diaminopimelate (L,L-DAP) to meso-diaminopimelate (meso-DAP), a precursor of L-lysine and an essential component of the bacterial peptidoglycan.</text>
</comment>
<comment type="catalytic activity">
    <reaction evidence="1">
        <text>(2S,6S)-2,6-diaminopimelate = meso-2,6-diaminopimelate</text>
        <dbReference type="Rhea" id="RHEA:15393"/>
        <dbReference type="ChEBI" id="CHEBI:57609"/>
        <dbReference type="ChEBI" id="CHEBI:57791"/>
        <dbReference type="EC" id="5.1.1.7"/>
    </reaction>
</comment>
<comment type="pathway">
    <text evidence="1">Amino-acid biosynthesis; L-lysine biosynthesis via DAP pathway; DL-2,6-diaminopimelate from LL-2,6-diaminopimelate: step 1/1.</text>
</comment>
<comment type="subunit">
    <text evidence="1">Homodimer.</text>
</comment>
<comment type="subcellular location">
    <subcellularLocation>
        <location evidence="1">Cytoplasm</location>
    </subcellularLocation>
</comment>
<comment type="similarity">
    <text evidence="1">Belongs to the diaminopimelate epimerase family.</text>
</comment>
<comment type="sequence caution" evidence="2">
    <conflict type="frameshift">
        <sequence resource="EMBL-CDS" id="CAA60229"/>
    </conflict>
</comment>
<gene>
    <name evidence="1" type="primary">dapF</name>
    <name type="ordered locus">CPE1846</name>
</gene>
<sequence>MKFSKMHGNGNDFIVIEDLNNEYLGKEGEIAQKMCHRRFGIGADGILIVRKNENCDIEMVIINSDGSYAAMCGNGIRCFAKYVYEKGIVKKDVLDVLTGDGVKRIFLEIENDKVKTINVNMGFGDFKPKNIPALCDEEIIEKKVSVGNGNFEITSLLMGVPHTIIFEEEKYPIECGRDIEKYELFPQGTNVNFCKVIDRNTMEVRTWERGAGPTLACGTGNCASVIAANKLGLVDKEVKVIVPGGELKVNIEDDGVKMIGNASFICDGTYLF</sequence>